<organism>
    <name type="scientific">Shigella flexneri</name>
    <dbReference type="NCBI Taxonomy" id="623"/>
    <lineage>
        <taxon>Bacteria</taxon>
        <taxon>Pseudomonadati</taxon>
        <taxon>Pseudomonadota</taxon>
        <taxon>Gammaproteobacteria</taxon>
        <taxon>Enterobacterales</taxon>
        <taxon>Enterobacteriaceae</taxon>
        <taxon>Shigella</taxon>
    </lineage>
</organism>
<evidence type="ECO:0000255" key="1">
    <source>
        <dbReference type="HAMAP-Rule" id="MF_00632"/>
    </source>
</evidence>
<evidence type="ECO:0000305" key="2"/>
<keyword id="KW-0547">Nucleotide-binding</keyword>
<keyword id="KW-1185">Reference proteome</keyword>
<gene>
    <name evidence="1" type="primary">yajQ</name>
    <name type="ordered locus">SF0363</name>
    <name type="ordered locus">S0371</name>
</gene>
<sequence>MPSFDIVSEVDLQEARNAVDNASREVESRFDFRNVEYSFELNDASKTIKVLSESDFQVNQLLDILRAKLLKRGIEGSSLDVPENIVHSGKTWFVEAKLKQGIESATQKKIVKMIKDSKLKVQAQIQGDEIRVTGKSRDDLQAVMAMVRGGDLGQPFQFKNFRD</sequence>
<dbReference type="EMBL" id="AE005674">
    <property type="protein sequence ID" value="AAN42021.2"/>
    <property type="molecule type" value="Genomic_DNA"/>
</dbReference>
<dbReference type="EMBL" id="AE014073">
    <property type="protein sequence ID" value="AAP15897.1"/>
    <property type="molecule type" value="Genomic_DNA"/>
</dbReference>
<dbReference type="RefSeq" id="NP_706314.2">
    <property type="nucleotide sequence ID" value="NC_004337.2"/>
</dbReference>
<dbReference type="RefSeq" id="WP_001138908.1">
    <property type="nucleotide sequence ID" value="NZ_CP123365.1"/>
</dbReference>
<dbReference type="SMR" id="P59561"/>
<dbReference type="STRING" id="198214.SF0363"/>
<dbReference type="PaxDb" id="198214-SF0363"/>
<dbReference type="GeneID" id="1027675"/>
<dbReference type="KEGG" id="sfl:SF0363"/>
<dbReference type="KEGG" id="sfx:S0371"/>
<dbReference type="PATRIC" id="fig|198214.7.peg.416"/>
<dbReference type="HOGENOM" id="CLU_099839_1_0_6"/>
<dbReference type="Proteomes" id="UP000001006">
    <property type="component" value="Chromosome"/>
</dbReference>
<dbReference type="Proteomes" id="UP000002673">
    <property type="component" value="Chromosome"/>
</dbReference>
<dbReference type="GO" id="GO:0005829">
    <property type="term" value="C:cytosol"/>
    <property type="evidence" value="ECO:0007669"/>
    <property type="project" value="TreeGrafter"/>
</dbReference>
<dbReference type="GO" id="GO:0000166">
    <property type="term" value="F:nucleotide binding"/>
    <property type="evidence" value="ECO:0007669"/>
    <property type="project" value="TreeGrafter"/>
</dbReference>
<dbReference type="CDD" id="cd11740">
    <property type="entry name" value="YajQ_like"/>
    <property type="match status" value="1"/>
</dbReference>
<dbReference type="FunFam" id="3.30.70.860:FF:000001">
    <property type="entry name" value="UPF0234 protein YajQ"/>
    <property type="match status" value="1"/>
</dbReference>
<dbReference type="FunFam" id="3.30.70.990:FF:000001">
    <property type="entry name" value="UPF0234 protein YajQ"/>
    <property type="match status" value="1"/>
</dbReference>
<dbReference type="Gene3D" id="3.30.70.860">
    <property type="match status" value="1"/>
</dbReference>
<dbReference type="Gene3D" id="3.30.70.990">
    <property type="entry name" value="YajQ-like, domain 2"/>
    <property type="match status" value="1"/>
</dbReference>
<dbReference type="HAMAP" id="MF_00632">
    <property type="entry name" value="YajQ"/>
    <property type="match status" value="1"/>
</dbReference>
<dbReference type="InterPro" id="IPR007551">
    <property type="entry name" value="DUF520"/>
</dbReference>
<dbReference type="InterPro" id="IPR035571">
    <property type="entry name" value="UPF0234-like_C"/>
</dbReference>
<dbReference type="InterPro" id="IPR035570">
    <property type="entry name" value="UPF0234_N"/>
</dbReference>
<dbReference type="InterPro" id="IPR036183">
    <property type="entry name" value="YajQ-like_sf"/>
</dbReference>
<dbReference type="NCBIfam" id="NF003819">
    <property type="entry name" value="PRK05412.1"/>
    <property type="match status" value="1"/>
</dbReference>
<dbReference type="PANTHER" id="PTHR30476">
    <property type="entry name" value="UPF0234 PROTEIN YAJQ"/>
    <property type="match status" value="1"/>
</dbReference>
<dbReference type="PANTHER" id="PTHR30476:SF0">
    <property type="entry name" value="UPF0234 PROTEIN YAJQ"/>
    <property type="match status" value="1"/>
</dbReference>
<dbReference type="Pfam" id="PF04461">
    <property type="entry name" value="DUF520"/>
    <property type="match status" value="1"/>
</dbReference>
<dbReference type="SUPFAM" id="SSF89963">
    <property type="entry name" value="YajQ-like"/>
    <property type="match status" value="2"/>
</dbReference>
<comment type="function">
    <text evidence="1">Nucleotide-binding protein.</text>
</comment>
<comment type="similarity">
    <text evidence="1">Belongs to the YajQ family.</text>
</comment>
<name>YAJQ_SHIFL</name>
<proteinExistence type="inferred from homology"/>
<protein>
    <recommendedName>
        <fullName evidence="1">Nucleotide-binding protein YajQ</fullName>
    </recommendedName>
</protein>
<accession>P59561</accession>
<feature type="chain" id="PRO_0000106200" description="Nucleotide-binding protein YajQ">
    <location>
        <begin position="1"/>
        <end position="163"/>
    </location>
</feature>
<feature type="sequence conflict" description="In Ref. 2; AAP15897." evidence="2" ref="2">
    <original>Y</original>
    <variation>A</variation>
    <location>
        <position position="37"/>
    </location>
</feature>
<reference key="1">
    <citation type="journal article" date="2002" name="Nucleic Acids Res.">
        <title>Genome sequence of Shigella flexneri 2a: insights into pathogenicity through comparison with genomes of Escherichia coli K12 and O157.</title>
        <authorList>
            <person name="Jin Q."/>
            <person name="Yuan Z."/>
            <person name="Xu J."/>
            <person name="Wang Y."/>
            <person name="Shen Y."/>
            <person name="Lu W."/>
            <person name="Wang J."/>
            <person name="Liu H."/>
            <person name="Yang J."/>
            <person name="Yang F."/>
            <person name="Zhang X."/>
            <person name="Zhang J."/>
            <person name="Yang G."/>
            <person name="Wu H."/>
            <person name="Qu D."/>
            <person name="Dong J."/>
            <person name="Sun L."/>
            <person name="Xue Y."/>
            <person name="Zhao A."/>
            <person name="Gao Y."/>
            <person name="Zhu J."/>
            <person name="Kan B."/>
            <person name="Ding K."/>
            <person name="Chen S."/>
            <person name="Cheng H."/>
            <person name="Yao Z."/>
            <person name="He B."/>
            <person name="Chen R."/>
            <person name="Ma D."/>
            <person name="Qiang B."/>
            <person name="Wen Y."/>
            <person name="Hou Y."/>
            <person name="Yu J."/>
        </authorList>
    </citation>
    <scope>NUCLEOTIDE SEQUENCE [LARGE SCALE GENOMIC DNA]</scope>
    <source>
        <strain>301 / Serotype 2a</strain>
    </source>
</reference>
<reference key="2">
    <citation type="journal article" date="2003" name="Infect. Immun.">
        <title>Complete genome sequence and comparative genomics of Shigella flexneri serotype 2a strain 2457T.</title>
        <authorList>
            <person name="Wei J."/>
            <person name="Goldberg M.B."/>
            <person name="Burland V."/>
            <person name="Venkatesan M.M."/>
            <person name="Deng W."/>
            <person name="Fournier G."/>
            <person name="Mayhew G.F."/>
            <person name="Plunkett G. III"/>
            <person name="Rose D.J."/>
            <person name="Darling A."/>
            <person name="Mau B."/>
            <person name="Perna N.T."/>
            <person name="Payne S.M."/>
            <person name="Runyen-Janecky L.J."/>
            <person name="Zhou S."/>
            <person name="Schwartz D.C."/>
            <person name="Blattner F.R."/>
        </authorList>
    </citation>
    <scope>NUCLEOTIDE SEQUENCE [LARGE SCALE GENOMIC DNA]</scope>
    <source>
        <strain>ATCC 700930 / 2457T / Serotype 2a</strain>
    </source>
</reference>